<protein>
    <recommendedName>
        <fullName evidence="1">Ribosomal RNA small subunit methyltransferase I</fullName>
        <ecNumber evidence="1">2.1.1.198</ecNumber>
    </recommendedName>
    <alternativeName>
        <fullName evidence="1">16S rRNA 2'-O-ribose C1402 methyltransferase</fullName>
    </alternativeName>
    <alternativeName>
        <fullName evidence="1">rRNA (cytidine-2'-O-)-methyltransferase RsmI</fullName>
    </alternativeName>
</protein>
<accession>Q2NAK3</accession>
<comment type="function">
    <text evidence="1">Catalyzes the 2'-O-methylation of the ribose of cytidine 1402 (C1402) in 16S rRNA.</text>
</comment>
<comment type="catalytic activity">
    <reaction evidence="1">
        <text>cytidine(1402) in 16S rRNA + S-adenosyl-L-methionine = 2'-O-methylcytidine(1402) in 16S rRNA + S-adenosyl-L-homocysteine + H(+)</text>
        <dbReference type="Rhea" id="RHEA:42924"/>
        <dbReference type="Rhea" id="RHEA-COMP:10285"/>
        <dbReference type="Rhea" id="RHEA-COMP:10286"/>
        <dbReference type="ChEBI" id="CHEBI:15378"/>
        <dbReference type="ChEBI" id="CHEBI:57856"/>
        <dbReference type="ChEBI" id="CHEBI:59789"/>
        <dbReference type="ChEBI" id="CHEBI:74495"/>
        <dbReference type="ChEBI" id="CHEBI:82748"/>
        <dbReference type="EC" id="2.1.1.198"/>
    </reaction>
</comment>
<comment type="subcellular location">
    <subcellularLocation>
        <location evidence="1">Cytoplasm</location>
    </subcellularLocation>
</comment>
<comment type="similarity">
    <text evidence="1">Belongs to the methyltransferase superfamily. RsmI family.</text>
</comment>
<comment type="sequence caution" evidence="2">
    <conflict type="erroneous initiation">
        <sequence resource="EMBL-CDS" id="ABC63288"/>
    </conflict>
    <text>Truncated N-terminus.</text>
</comment>
<proteinExistence type="inferred from homology"/>
<sequence>MQHDHSAEPLSPGLYIVATPIGNLGDITLRAIETLRRCDAVACEDTRMTGKLLKHLGISKSLWRYDDHSDAKAREKIVAAISEKAVALVSDAGTPLISDPGYRLVRDARDASLPVTTIPGACAAIAGLTLSGLPSDRFLFAGFLPVKDKARREMLEKLAPVDASLIFYETGPRLLKSLAAIDEMLPNREISVARELTKLHEECRRGMGAGLMAHYQANPPKGEIVLMVGPPPEAAPDDTDAELMLREALETMKPSQAAGHVAKATGLDRKDLYSRALELKT</sequence>
<feature type="chain" id="PRO_0000394486" description="Ribosomal RNA small subunit methyltransferase I">
    <location>
        <begin position="1"/>
        <end position="281"/>
    </location>
</feature>
<gene>
    <name evidence="1" type="primary">rsmI</name>
    <name type="ordered locus">ELI_05980</name>
</gene>
<name>RSMI_ERYLH</name>
<keyword id="KW-0963">Cytoplasm</keyword>
<keyword id="KW-0489">Methyltransferase</keyword>
<keyword id="KW-1185">Reference proteome</keyword>
<keyword id="KW-0698">rRNA processing</keyword>
<keyword id="KW-0949">S-adenosyl-L-methionine</keyword>
<keyword id="KW-0808">Transferase</keyword>
<reference key="1">
    <citation type="journal article" date="2009" name="J. Bacteriol.">
        <title>Complete genome sequence of Erythrobacter litoralis HTCC2594.</title>
        <authorList>
            <person name="Oh H.M."/>
            <person name="Giovannoni S.J."/>
            <person name="Ferriera S."/>
            <person name="Johnson J."/>
            <person name="Cho J.C."/>
        </authorList>
    </citation>
    <scope>NUCLEOTIDE SEQUENCE [LARGE SCALE GENOMIC DNA]</scope>
    <source>
        <strain>HTCC2594</strain>
    </source>
</reference>
<organism>
    <name type="scientific">Erythrobacter litoralis (strain HTCC2594)</name>
    <dbReference type="NCBI Taxonomy" id="314225"/>
    <lineage>
        <taxon>Bacteria</taxon>
        <taxon>Pseudomonadati</taxon>
        <taxon>Pseudomonadota</taxon>
        <taxon>Alphaproteobacteria</taxon>
        <taxon>Sphingomonadales</taxon>
        <taxon>Erythrobacteraceae</taxon>
        <taxon>Erythrobacter/Porphyrobacter group</taxon>
        <taxon>Erythrobacter</taxon>
    </lineage>
</organism>
<evidence type="ECO:0000255" key="1">
    <source>
        <dbReference type="HAMAP-Rule" id="MF_01877"/>
    </source>
</evidence>
<evidence type="ECO:0000305" key="2"/>
<dbReference type="EC" id="2.1.1.198" evidence="1"/>
<dbReference type="EMBL" id="CP000157">
    <property type="protein sequence ID" value="ABC63288.1"/>
    <property type="status" value="ALT_INIT"/>
    <property type="molecule type" value="Genomic_DNA"/>
</dbReference>
<dbReference type="RefSeq" id="WP_041685125.1">
    <property type="nucleotide sequence ID" value="NC_007722.1"/>
</dbReference>
<dbReference type="SMR" id="Q2NAK3"/>
<dbReference type="STRING" id="314225.ELI_05980"/>
<dbReference type="KEGG" id="eli:ELI_05980"/>
<dbReference type="eggNOG" id="COG0313">
    <property type="taxonomic scope" value="Bacteria"/>
</dbReference>
<dbReference type="HOGENOM" id="CLU_044779_2_1_5"/>
<dbReference type="OrthoDB" id="9809084at2"/>
<dbReference type="Proteomes" id="UP000008808">
    <property type="component" value="Chromosome"/>
</dbReference>
<dbReference type="GO" id="GO:0005737">
    <property type="term" value="C:cytoplasm"/>
    <property type="evidence" value="ECO:0007669"/>
    <property type="project" value="UniProtKB-SubCell"/>
</dbReference>
<dbReference type="GO" id="GO:0070677">
    <property type="term" value="F:rRNA (cytosine-2'-O-)-methyltransferase activity"/>
    <property type="evidence" value="ECO:0007669"/>
    <property type="project" value="UniProtKB-UniRule"/>
</dbReference>
<dbReference type="CDD" id="cd11648">
    <property type="entry name" value="RsmI"/>
    <property type="match status" value="1"/>
</dbReference>
<dbReference type="FunFam" id="3.30.950.10:FF:000002">
    <property type="entry name" value="Ribosomal RNA small subunit methyltransferase I"/>
    <property type="match status" value="1"/>
</dbReference>
<dbReference type="FunFam" id="3.40.1010.10:FF:000007">
    <property type="entry name" value="Ribosomal RNA small subunit methyltransferase I"/>
    <property type="match status" value="1"/>
</dbReference>
<dbReference type="Gene3D" id="3.40.1010.10">
    <property type="entry name" value="Cobalt-precorrin-4 Transmethylase, Domain 1"/>
    <property type="match status" value="1"/>
</dbReference>
<dbReference type="Gene3D" id="3.30.950.10">
    <property type="entry name" value="Methyltransferase, Cobalt-precorrin-4 Transmethylase, Domain 2"/>
    <property type="match status" value="1"/>
</dbReference>
<dbReference type="HAMAP" id="MF_01877">
    <property type="entry name" value="16SrRNA_methyltr_I"/>
    <property type="match status" value="1"/>
</dbReference>
<dbReference type="InterPro" id="IPR000878">
    <property type="entry name" value="4pyrrol_Mease"/>
</dbReference>
<dbReference type="InterPro" id="IPR035996">
    <property type="entry name" value="4pyrrol_Methylase_sf"/>
</dbReference>
<dbReference type="InterPro" id="IPR014777">
    <property type="entry name" value="4pyrrole_Mease_sub1"/>
</dbReference>
<dbReference type="InterPro" id="IPR014776">
    <property type="entry name" value="4pyrrole_Mease_sub2"/>
</dbReference>
<dbReference type="InterPro" id="IPR008189">
    <property type="entry name" value="rRNA_ssu_MeTfrase_I"/>
</dbReference>
<dbReference type="InterPro" id="IPR053910">
    <property type="entry name" value="RsmI_HTH"/>
</dbReference>
<dbReference type="InterPro" id="IPR018063">
    <property type="entry name" value="SAM_MeTrfase_RsmI_CS"/>
</dbReference>
<dbReference type="NCBIfam" id="TIGR00096">
    <property type="entry name" value="16S rRNA (cytidine(1402)-2'-O)-methyltransferase"/>
    <property type="match status" value="1"/>
</dbReference>
<dbReference type="PANTHER" id="PTHR46111">
    <property type="entry name" value="RIBOSOMAL RNA SMALL SUBUNIT METHYLTRANSFERASE I"/>
    <property type="match status" value="1"/>
</dbReference>
<dbReference type="PANTHER" id="PTHR46111:SF1">
    <property type="entry name" value="RIBOSOMAL RNA SMALL SUBUNIT METHYLTRANSFERASE I"/>
    <property type="match status" value="1"/>
</dbReference>
<dbReference type="Pfam" id="PF23016">
    <property type="entry name" value="RsmI_C"/>
    <property type="match status" value="1"/>
</dbReference>
<dbReference type="Pfam" id="PF00590">
    <property type="entry name" value="TP_methylase"/>
    <property type="match status" value="1"/>
</dbReference>
<dbReference type="PIRSF" id="PIRSF005917">
    <property type="entry name" value="MTase_YraL"/>
    <property type="match status" value="1"/>
</dbReference>
<dbReference type="SUPFAM" id="SSF53790">
    <property type="entry name" value="Tetrapyrrole methylase"/>
    <property type="match status" value="1"/>
</dbReference>
<dbReference type="PROSITE" id="PS01296">
    <property type="entry name" value="RSMI"/>
    <property type="match status" value="1"/>
</dbReference>